<accession>C1JJY3</accession>
<organismHost>
    <name type="scientific">Halorubrum sp. PV6</name>
    <dbReference type="NCBI Taxonomy" id="634157"/>
</organismHost>
<proteinExistence type="evidence at protein level"/>
<comment type="function">
    <text>Envelope protein that may play a role in host-cell attachment and viral genome entry.</text>
</comment>
<comment type="subcellular location">
    <subcellularLocation>
        <location evidence="3">Virion membrane</location>
        <topology evidence="3">Single-pass type I membrane protein</topology>
    </subcellularLocation>
</comment>
<comment type="PTM">
    <text evidence="4">N-glycosylated by a pentasaccharide comprising glucose, glucuronic acid and a terminal 5-N-formyl-legionaminic acid residue.</text>
</comment>
<sequence>MSVNRSSIKSLLMVFMIVSSSLLAPVGGAAADEFRTPAASDTSPEAGECSNLDDFIMFLSVGRINADSCSRQAYVDAAVQDMKDSDANQTKVDIYSAAAGVKGGSETWAAPYDNYLNDTESIAWMKAESAIAQSYSEGESKTEAKVAAKAAIADYYATKQKNLIEQWNFANAQMFTLREQARMEDGISRNYVEPAYRNVEKTNSPDYSLAYSNTTVEKSLVDGTTVNTTGVSMDVTVQHTTVSDVATVSSGPVRAGKYNNQYNEWKATYYSWSVEPASPSQDTLYAVHFQPYADRWQRIVDMNGALQSEADNFVNATWDDYDTGQINASDVLSANTAMSEYGVRSGSESEGLWRSTAALSMMGYDTPNLNNSGMMTVEYKNVQHTGLLMAKNAPNGSWQVNTTYNTSNIDGPVFMATTEGTKLDFADGEEFTIVGMTAKDGTAVNSTQTTKYRYKTANTTELLEVQNQLIELRQEIEDREPEAGGFFGSGSTDTMLVGLLALAGVLLLAQSNNRGGRR</sequence>
<organism>
    <name type="scientific">Halorubrum pleomorphic virus 1</name>
    <name type="common">HRPV-1</name>
    <dbReference type="NCBI Taxonomy" id="634168"/>
    <lineage>
        <taxon>Viruses</taxon>
        <taxon>Monodnaviria</taxon>
        <taxon>Trapavirae</taxon>
        <taxon>Saleviricota</taxon>
        <taxon>Huolimaviricetes</taxon>
        <taxon>Haloruvirales</taxon>
        <taxon>Pleolipoviridae</taxon>
        <taxon>Alphapleolipovirus</taxon>
        <taxon>Alphapleolipovirus finnoniense</taxon>
    </lineage>
</organism>
<feature type="signal peptide" evidence="2">
    <location>
        <begin position="1"/>
        <end position="31"/>
    </location>
</feature>
<feature type="chain" id="PRO_5000456197" description="Envelope protein">
    <location>
        <begin position="32"/>
        <end position="518"/>
    </location>
</feature>
<feature type="topological domain" description="Extracellular">
    <location>
        <begin position="32"/>
        <end position="485"/>
    </location>
</feature>
<feature type="transmembrane region" description="Helical" evidence="1">
    <location>
        <begin position="486"/>
        <end position="506"/>
    </location>
</feature>
<feature type="topological domain" description="Cytoplasmic">
    <location>
        <begin position="507"/>
        <end position="518"/>
    </location>
</feature>
<feature type="glycosylation site" description="N-linked (GlcNAc...) (hybrid) asparagine; by host" evidence="4">
    <location>
        <position position="213"/>
    </location>
</feature>
<dbReference type="EMBL" id="FJ685651">
    <property type="protein sequence ID" value="ACO54899.1"/>
    <property type="molecule type" value="Genomic_DNA"/>
</dbReference>
<dbReference type="RefSeq" id="YP_002791889.1">
    <property type="nucleotide sequence ID" value="NC_012558.1"/>
</dbReference>
<dbReference type="EMDB" id="EMD-4000"/>
<dbReference type="SMR" id="C1JJY3"/>
<dbReference type="iPTMnet" id="C1JJY3"/>
<dbReference type="KEGG" id="vg:7755264"/>
<dbReference type="OrthoDB" id="35328at10239"/>
<dbReference type="Proteomes" id="UP000009401">
    <property type="component" value="Genome"/>
</dbReference>
<dbReference type="GO" id="GO:0016020">
    <property type="term" value="C:membrane"/>
    <property type="evidence" value="ECO:0007669"/>
    <property type="project" value="UniProtKB-KW"/>
</dbReference>
<dbReference type="GO" id="GO:0055036">
    <property type="term" value="C:virion membrane"/>
    <property type="evidence" value="ECO:0007669"/>
    <property type="project" value="UniProtKB-SubCell"/>
</dbReference>
<protein>
    <recommendedName>
        <fullName>Envelope protein</fullName>
        <shortName>Env</shortName>
    </recommendedName>
    <alternativeName>
        <fullName>Virion protein 4</fullName>
        <shortName>VP4</shortName>
    </alternativeName>
</protein>
<name>ENV_HAPV1</name>
<evidence type="ECO:0000255" key="1"/>
<evidence type="ECO:0000269" key="2">
    <source>
    </source>
</evidence>
<evidence type="ECO:0000269" key="3">
    <source>
    </source>
</evidence>
<evidence type="ECO:0000269" key="4">
    <source>
    </source>
</evidence>
<keyword id="KW-0903">Direct protein sequencing</keyword>
<keyword id="KW-0325">Glycoprotein</keyword>
<keyword id="KW-0472">Membrane</keyword>
<keyword id="KW-1185">Reference proteome</keyword>
<keyword id="KW-0732">Signal</keyword>
<keyword id="KW-0812">Transmembrane</keyword>
<keyword id="KW-1133">Transmembrane helix</keyword>
<keyword id="KW-0946">Virion</keyword>
<gene>
    <name type="ORF">ORF4</name>
</gene>
<reference key="1">
    <citation type="journal article" date="2009" name="Mol. Microbiol.">
        <title>An ssDNA virus infecting archaea: a new lineage of viruses with a membrane envelope.</title>
        <authorList>
            <person name="Pietila M.K."/>
            <person name="Roine E."/>
            <person name="Paulin L."/>
            <person name="Kalkkinen N."/>
            <person name="Bamford D.H."/>
        </authorList>
    </citation>
    <scope>NUCLEOTIDE SEQUENCE [GENOMIC DNA]</scope>
    <scope>PROTEIN SEQUENCE OF 32-41</scope>
</reference>
<reference key="2">
    <citation type="journal article" date="2010" name="J. Virol.">
        <title>The single-stranded DNA genome of novel archaeal virus halorubrum pleomorphic virus 1 is enclosed in the envelope decorated with glycoprotein spikes.</title>
        <authorList>
            <person name="Pietila M.K."/>
            <person name="Laurinavicius S."/>
            <person name="Sund J."/>
            <person name="Roine E."/>
            <person name="Bamford D.H."/>
        </authorList>
    </citation>
    <scope>SUBCELLULAR LOCATION</scope>
</reference>
<reference key="3">
    <citation type="journal article" date="2012" name="Mol. Microbiol.">
        <title>Diversity in prokaryotic glycosylation: an archaeal-derived N-linked glycan contains legionaminic acid.</title>
        <authorList>
            <person name="Kandiba L."/>
            <person name="Aitio O."/>
            <person name="Helin J."/>
            <person name="Guan Z."/>
            <person name="Permi P."/>
            <person name="Bamford D.H."/>
            <person name="Eichler J."/>
            <person name="Roine E."/>
        </authorList>
    </citation>
    <scope>GLYCOSYLATION AT ASN-213</scope>
    <scope>PROTEIN SEQUENCE OF 202-218</scope>
</reference>